<organism>
    <name type="scientific">Drosophila melanogaster</name>
    <name type="common">Fruit fly</name>
    <dbReference type="NCBI Taxonomy" id="7227"/>
    <lineage>
        <taxon>Eukaryota</taxon>
        <taxon>Metazoa</taxon>
        <taxon>Ecdysozoa</taxon>
        <taxon>Arthropoda</taxon>
        <taxon>Hexapoda</taxon>
        <taxon>Insecta</taxon>
        <taxon>Pterygota</taxon>
        <taxon>Neoptera</taxon>
        <taxon>Endopterygota</taxon>
        <taxon>Diptera</taxon>
        <taxon>Brachycera</taxon>
        <taxon>Muscomorpha</taxon>
        <taxon>Ephydroidea</taxon>
        <taxon>Drosophilidae</taxon>
        <taxon>Drosophila</taxon>
        <taxon>Sophophora</taxon>
    </lineage>
</organism>
<comment type="function">
    <text evidence="1">Essential component of the PAM complex, a complex required for the translocation of transit peptide-containing proteins from the inner membrane into the mitochondrial matrix in an ATP-dependent manner. Seems to control the nucleotide-dependent binding of mitochondrial HSP70 to substrate proteins (By similarity).</text>
</comment>
<comment type="subunit">
    <text evidence="1">Probable component of the PAM complex at least composed of a mitochondrial HSP70 protein, Roe1, TIM44, blp/TIM16 and TIM14.</text>
</comment>
<comment type="subcellular location">
    <subcellularLocation>
        <location evidence="4">Mitochondrion matrix</location>
    </subcellularLocation>
</comment>
<comment type="similarity">
    <text evidence="4">Belongs to the GrpE family.</text>
</comment>
<feature type="transit peptide" description="Mitochondrion" evidence="2">
    <location>
        <begin position="1"/>
        <end status="unknown"/>
    </location>
</feature>
<feature type="chain" id="PRO_0000013048" description="GrpE protein homolog, mitochondrial">
    <location>
        <begin status="unknown"/>
        <end position="213"/>
    </location>
</feature>
<feature type="region of interest" description="Disordered" evidence="3">
    <location>
        <begin position="35"/>
        <end position="55"/>
    </location>
</feature>
<feature type="compositionally biased region" description="Basic and acidic residues" evidence="3">
    <location>
        <begin position="38"/>
        <end position="55"/>
    </location>
</feature>
<feature type="sequence conflict" description="In Ref. 1; AAA79044." evidence="4" ref="1">
    <original>V</original>
    <variation>L</variation>
    <location>
        <position position="55"/>
    </location>
</feature>
<feature type="sequence conflict" description="In Ref. 1; AAA79044." evidence="4" ref="1">
    <original>A</original>
    <variation>T</variation>
    <location>
        <position position="132"/>
    </location>
</feature>
<feature type="sequence conflict" description="In Ref. 4; AAM11242." evidence="4" ref="4">
    <original>E</original>
    <variation>K</variation>
    <location>
        <position position="158"/>
    </location>
</feature>
<feature type="sequence conflict" description="In Ref. 1; AAA79044." evidence="4" ref="1">
    <original>P</original>
    <variation>S</variation>
    <location>
        <position position="159"/>
    </location>
</feature>
<sequence length="213" mass="23926">MSAKAALPLQMFGRRLVHLRSSVTSQNMSALRLYSTEKQPEEATEQKATESSPEVEKLTKELAAAKEQNAELMDKYKRSLADSENMRNRLNKQISDAKIFGIQSFCKDLLEVADTLGHATQAVPKDKLSGNADLKNLYEGLTMTRASLLQVFKRHGLEPLDPINQKFDPNQHEALFQKEDKTVEPNTVVEVTKLGYKLHERCIRPALVGVSKC</sequence>
<accession>P48604</accession>
<accession>Q8SX27</accession>
<accession>Q9V6R8</accession>
<keyword id="KW-0143">Chaperone</keyword>
<keyword id="KW-0496">Mitochondrion</keyword>
<keyword id="KW-1185">Reference proteome</keyword>
<keyword id="KW-0809">Transit peptide</keyword>
<gene>
    <name type="primary">Roe1</name>
    <name type="ORF">CG6155</name>
</gene>
<protein>
    <recommendedName>
        <fullName>GrpE protein homolog, mitochondrial</fullName>
    </recommendedName>
    <alternativeName>
        <fullName>dRoe1</fullName>
    </alternativeName>
</protein>
<reference key="1">
    <citation type="submission" date="1995-08" db="EMBL/GenBank/DDBJ databases">
        <title>Droe1, a Drosophila mitochondrial homolog of bacterial GrpE can complement grpE mutants.</title>
        <authorList>
            <person name="Lee J.Y."/>
            <person name="Mehta A.D."/>
            <person name="Tilly K."/>
            <person name="Gambill B.D."/>
            <person name="Kraut J."/>
            <person name="Palter K.B."/>
        </authorList>
    </citation>
    <scope>NUCLEOTIDE SEQUENCE [MRNA]</scope>
</reference>
<reference key="2">
    <citation type="journal article" date="2000" name="Science">
        <title>The genome sequence of Drosophila melanogaster.</title>
        <authorList>
            <person name="Adams M.D."/>
            <person name="Celniker S.E."/>
            <person name="Holt R.A."/>
            <person name="Evans C.A."/>
            <person name="Gocayne J.D."/>
            <person name="Amanatides P.G."/>
            <person name="Scherer S.E."/>
            <person name="Li P.W."/>
            <person name="Hoskins R.A."/>
            <person name="Galle R.F."/>
            <person name="George R.A."/>
            <person name="Lewis S.E."/>
            <person name="Richards S."/>
            <person name="Ashburner M."/>
            <person name="Henderson S.N."/>
            <person name="Sutton G.G."/>
            <person name="Wortman J.R."/>
            <person name="Yandell M.D."/>
            <person name="Zhang Q."/>
            <person name="Chen L.X."/>
            <person name="Brandon R.C."/>
            <person name="Rogers Y.-H.C."/>
            <person name="Blazej R.G."/>
            <person name="Champe M."/>
            <person name="Pfeiffer B.D."/>
            <person name="Wan K.H."/>
            <person name="Doyle C."/>
            <person name="Baxter E.G."/>
            <person name="Helt G."/>
            <person name="Nelson C.R."/>
            <person name="Miklos G.L.G."/>
            <person name="Abril J.F."/>
            <person name="Agbayani A."/>
            <person name="An H.-J."/>
            <person name="Andrews-Pfannkoch C."/>
            <person name="Baldwin D."/>
            <person name="Ballew R.M."/>
            <person name="Basu A."/>
            <person name="Baxendale J."/>
            <person name="Bayraktaroglu L."/>
            <person name="Beasley E.M."/>
            <person name="Beeson K.Y."/>
            <person name="Benos P.V."/>
            <person name="Berman B.P."/>
            <person name="Bhandari D."/>
            <person name="Bolshakov S."/>
            <person name="Borkova D."/>
            <person name="Botchan M.R."/>
            <person name="Bouck J."/>
            <person name="Brokstein P."/>
            <person name="Brottier P."/>
            <person name="Burtis K.C."/>
            <person name="Busam D.A."/>
            <person name="Butler H."/>
            <person name="Cadieu E."/>
            <person name="Center A."/>
            <person name="Chandra I."/>
            <person name="Cherry J.M."/>
            <person name="Cawley S."/>
            <person name="Dahlke C."/>
            <person name="Davenport L.B."/>
            <person name="Davies P."/>
            <person name="de Pablos B."/>
            <person name="Delcher A."/>
            <person name="Deng Z."/>
            <person name="Mays A.D."/>
            <person name="Dew I."/>
            <person name="Dietz S.M."/>
            <person name="Dodson K."/>
            <person name="Doup L.E."/>
            <person name="Downes M."/>
            <person name="Dugan-Rocha S."/>
            <person name="Dunkov B.C."/>
            <person name="Dunn P."/>
            <person name="Durbin K.J."/>
            <person name="Evangelista C.C."/>
            <person name="Ferraz C."/>
            <person name="Ferriera S."/>
            <person name="Fleischmann W."/>
            <person name="Fosler C."/>
            <person name="Gabrielian A.E."/>
            <person name="Garg N.S."/>
            <person name="Gelbart W.M."/>
            <person name="Glasser K."/>
            <person name="Glodek A."/>
            <person name="Gong F."/>
            <person name="Gorrell J.H."/>
            <person name="Gu Z."/>
            <person name="Guan P."/>
            <person name="Harris M."/>
            <person name="Harris N.L."/>
            <person name="Harvey D.A."/>
            <person name="Heiman T.J."/>
            <person name="Hernandez J.R."/>
            <person name="Houck J."/>
            <person name="Hostin D."/>
            <person name="Houston K.A."/>
            <person name="Howland T.J."/>
            <person name="Wei M.-H."/>
            <person name="Ibegwam C."/>
            <person name="Jalali M."/>
            <person name="Kalush F."/>
            <person name="Karpen G.H."/>
            <person name="Ke Z."/>
            <person name="Kennison J.A."/>
            <person name="Ketchum K.A."/>
            <person name="Kimmel B.E."/>
            <person name="Kodira C.D."/>
            <person name="Kraft C.L."/>
            <person name="Kravitz S."/>
            <person name="Kulp D."/>
            <person name="Lai Z."/>
            <person name="Lasko P."/>
            <person name="Lei Y."/>
            <person name="Levitsky A.A."/>
            <person name="Li J.H."/>
            <person name="Li Z."/>
            <person name="Liang Y."/>
            <person name="Lin X."/>
            <person name="Liu X."/>
            <person name="Mattei B."/>
            <person name="McIntosh T.C."/>
            <person name="McLeod M.P."/>
            <person name="McPherson D."/>
            <person name="Merkulov G."/>
            <person name="Milshina N.V."/>
            <person name="Mobarry C."/>
            <person name="Morris J."/>
            <person name="Moshrefi A."/>
            <person name="Mount S.M."/>
            <person name="Moy M."/>
            <person name="Murphy B."/>
            <person name="Murphy L."/>
            <person name="Muzny D.M."/>
            <person name="Nelson D.L."/>
            <person name="Nelson D.R."/>
            <person name="Nelson K.A."/>
            <person name="Nixon K."/>
            <person name="Nusskern D.R."/>
            <person name="Pacleb J.M."/>
            <person name="Palazzolo M."/>
            <person name="Pittman G.S."/>
            <person name="Pan S."/>
            <person name="Pollard J."/>
            <person name="Puri V."/>
            <person name="Reese M.G."/>
            <person name="Reinert K."/>
            <person name="Remington K."/>
            <person name="Saunders R.D.C."/>
            <person name="Scheeler F."/>
            <person name="Shen H."/>
            <person name="Shue B.C."/>
            <person name="Siden-Kiamos I."/>
            <person name="Simpson M."/>
            <person name="Skupski M.P."/>
            <person name="Smith T.J."/>
            <person name="Spier E."/>
            <person name="Spradling A.C."/>
            <person name="Stapleton M."/>
            <person name="Strong R."/>
            <person name="Sun E."/>
            <person name="Svirskas R."/>
            <person name="Tector C."/>
            <person name="Turner R."/>
            <person name="Venter E."/>
            <person name="Wang A.H."/>
            <person name="Wang X."/>
            <person name="Wang Z.-Y."/>
            <person name="Wassarman D.A."/>
            <person name="Weinstock G.M."/>
            <person name="Weissenbach J."/>
            <person name="Williams S.M."/>
            <person name="Woodage T."/>
            <person name="Worley K.C."/>
            <person name="Wu D."/>
            <person name="Yang S."/>
            <person name="Yao Q.A."/>
            <person name="Ye J."/>
            <person name="Yeh R.-F."/>
            <person name="Zaveri J.S."/>
            <person name="Zhan M."/>
            <person name="Zhang G."/>
            <person name="Zhao Q."/>
            <person name="Zheng L."/>
            <person name="Zheng X.H."/>
            <person name="Zhong F.N."/>
            <person name="Zhong W."/>
            <person name="Zhou X."/>
            <person name="Zhu S.C."/>
            <person name="Zhu X."/>
            <person name="Smith H.O."/>
            <person name="Gibbs R.A."/>
            <person name="Myers E.W."/>
            <person name="Rubin G.M."/>
            <person name="Venter J.C."/>
        </authorList>
    </citation>
    <scope>NUCLEOTIDE SEQUENCE [LARGE SCALE GENOMIC DNA]</scope>
    <source>
        <strain>Berkeley</strain>
    </source>
</reference>
<reference key="3">
    <citation type="journal article" date="2002" name="Genome Biol.">
        <title>Annotation of the Drosophila melanogaster euchromatic genome: a systematic review.</title>
        <authorList>
            <person name="Misra S."/>
            <person name="Crosby M.A."/>
            <person name="Mungall C.J."/>
            <person name="Matthews B.B."/>
            <person name="Campbell K.S."/>
            <person name="Hradecky P."/>
            <person name="Huang Y."/>
            <person name="Kaminker J.S."/>
            <person name="Millburn G.H."/>
            <person name="Prochnik S.E."/>
            <person name="Smith C.D."/>
            <person name="Tupy J.L."/>
            <person name="Whitfield E.J."/>
            <person name="Bayraktaroglu L."/>
            <person name="Berman B.P."/>
            <person name="Bettencourt B.R."/>
            <person name="Celniker S.E."/>
            <person name="de Grey A.D.N.J."/>
            <person name="Drysdale R.A."/>
            <person name="Harris N.L."/>
            <person name="Richter J."/>
            <person name="Russo S."/>
            <person name="Schroeder A.J."/>
            <person name="Shu S.Q."/>
            <person name="Stapleton M."/>
            <person name="Yamada C."/>
            <person name="Ashburner M."/>
            <person name="Gelbart W.M."/>
            <person name="Rubin G.M."/>
            <person name="Lewis S.E."/>
        </authorList>
    </citation>
    <scope>GENOME REANNOTATION</scope>
    <source>
        <strain>Berkeley</strain>
    </source>
</reference>
<reference key="4">
    <citation type="journal article" date="2002" name="Genome Biol.">
        <title>A Drosophila full-length cDNA resource.</title>
        <authorList>
            <person name="Stapleton M."/>
            <person name="Carlson J.W."/>
            <person name="Brokstein P."/>
            <person name="Yu C."/>
            <person name="Champe M."/>
            <person name="George R.A."/>
            <person name="Guarin H."/>
            <person name="Kronmiller B."/>
            <person name="Pacleb J.M."/>
            <person name="Park S."/>
            <person name="Wan K.H."/>
            <person name="Rubin G.M."/>
            <person name="Celniker S.E."/>
        </authorList>
    </citation>
    <scope>NUCLEOTIDE SEQUENCE [LARGE SCALE MRNA]</scope>
    <source>
        <strain>Berkeley</strain>
        <tissue>Embryo</tissue>
    </source>
</reference>
<dbReference type="EMBL" id="U34903">
    <property type="protein sequence ID" value="AAA79044.1"/>
    <property type="molecule type" value="mRNA"/>
</dbReference>
<dbReference type="EMBL" id="AE013599">
    <property type="protein sequence ID" value="AAF58354.1"/>
    <property type="molecule type" value="Genomic_DNA"/>
</dbReference>
<dbReference type="EMBL" id="AY094889">
    <property type="protein sequence ID" value="AAM11242.1"/>
    <property type="molecule type" value="mRNA"/>
</dbReference>
<dbReference type="RefSeq" id="NP_610886.2">
    <property type="nucleotide sequence ID" value="NM_137042.4"/>
</dbReference>
<dbReference type="SMR" id="P48604"/>
<dbReference type="BioGRID" id="62264">
    <property type="interactions" value="26"/>
</dbReference>
<dbReference type="FunCoup" id="P48604">
    <property type="interactions" value="1949"/>
</dbReference>
<dbReference type="IntAct" id="P48604">
    <property type="interactions" value="42"/>
</dbReference>
<dbReference type="STRING" id="7227.FBpp0086795"/>
<dbReference type="PaxDb" id="7227-FBpp0086795"/>
<dbReference type="DNASU" id="36508"/>
<dbReference type="EnsemblMetazoa" id="FBtr0087675">
    <property type="protein sequence ID" value="FBpp0086795"/>
    <property type="gene ID" value="FBgn0014877"/>
</dbReference>
<dbReference type="GeneID" id="36508"/>
<dbReference type="KEGG" id="dme:Dmel_CG6155"/>
<dbReference type="UCSC" id="CG6155-RA">
    <property type="organism name" value="d. melanogaster"/>
</dbReference>
<dbReference type="AGR" id="FB:FBgn0014877"/>
<dbReference type="CTD" id="36508"/>
<dbReference type="FlyBase" id="FBgn0014877">
    <property type="gene designation" value="Roe1"/>
</dbReference>
<dbReference type="VEuPathDB" id="VectorBase:FBgn0014877"/>
<dbReference type="eggNOG" id="KOG3003">
    <property type="taxonomic scope" value="Eukaryota"/>
</dbReference>
<dbReference type="GeneTree" id="ENSGT00390000005589"/>
<dbReference type="HOGENOM" id="CLU_057217_0_1_1"/>
<dbReference type="InParanoid" id="P48604"/>
<dbReference type="OMA" id="PHRHQAI"/>
<dbReference type="OrthoDB" id="201635at2759"/>
<dbReference type="PhylomeDB" id="P48604"/>
<dbReference type="SignaLink" id="P48604"/>
<dbReference type="BioGRID-ORCS" id="36508">
    <property type="hits" value="0 hits in 3 CRISPR screens"/>
</dbReference>
<dbReference type="GenomeRNAi" id="36508"/>
<dbReference type="PRO" id="PR:P48604"/>
<dbReference type="Proteomes" id="UP000000803">
    <property type="component" value="Chromosome 2R"/>
</dbReference>
<dbReference type="Bgee" id="FBgn0014877">
    <property type="expression patterns" value="Expressed in adult abdomen and 143 other cell types or tissues"/>
</dbReference>
<dbReference type="ExpressionAtlas" id="P48604">
    <property type="expression patterns" value="baseline and differential"/>
</dbReference>
<dbReference type="GO" id="GO:0005759">
    <property type="term" value="C:mitochondrial matrix"/>
    <property type="evidence" value="ECO:0000250"/>
    <property type="project" value="FlyBase"/>
</dbReference>
<dbReference type="GO" id="GO:0005739">
    <property type="term" value="C:mitochondrion"/>
    <property type="evidence" value="ECO:0007005"/>
    <property type="project" value="FlyBase"/>
</dbReference>
<dbReference type="GO" id="GO:0001405">
    <property type="term" value="C:PAM complex, Tim23 associated import motor"/>
    <property type="evidence" value="ECO:0000318"/>
    <property type="project" value="GO_Central"/>
</dbReference>
<dbReference type="GO" id="GO:0000774">
    <property type="term" value="F:adenyl-nucleotide exchange factor activity"/>
    <property type="evidence" value="ECO:0000250"/>
    <property type="project" value="FlyBase"/>
</dbReference>
<dbReference type="GO" id="GO:0042803">
    <property type="term" value="F:protein homodimerization activity"/>
    <property type="evidence" value="ECO:0007669"/>
    <property type="project" value="InterPro"/>
</dbReference>
<dbReference type="GO" id="GO:0051087">
    <property type="term" value="F:protein-folding chaperone binding"/>
    <property type="evidence" value="ECO:0007669"/>
    <property type="project" value="InterPro"/>
</dbReference>
<dbReference type="GO" id="GO:0051082">
    <property type="term" value="F:unfolded protein binding"/>
    <property type="evidence" value="ECO:0000250"/>
    <property type="project" value="FlyBase"/>
</dbReference>
<dbReference type="GO" id="GO:0030150">
    <property type="term" value="P:protein import into mitochondrial matrix"/>
    <property type="evidence" value="ECO:0000250"/>
    <property type="project" value="FlyBase"/>
</dbReference>
<dbReference type="GO" id="GO:0042026">
    <property type="term" value="P:protein refolding"/>
    <property type="evidence" value="ECO:0000250"/>
    <property type="project" value="FlyBase"/>
</dbReference>
<dbReference type="CDD" id="cd00446">
    <property type="entry name" value="GrpE"/>
    <property type="match status" value="1"/>
</dbReference>
<dbReference type="FunFam" id="2.30.22.10:FF:000002">
    <property type="entry name" value="GrpE protein homolog"/>
    <property type="match status" value="1"/>
</dbReference>
<dbReference type="FunFam" id="3.90.20.20:FF:000003">
    <property type="entry name" value="GrpE protein homolog"/>
    <property type="match status" value="1"/>
</dbReference>
<dbReference type="Gene3D" id="3.90.20.20">
    <property type="match status" value="1"/>
</dbReference>
<dbReference type="Gene3D" id="2.30.22.10">
    <property type="entry name" value="Head domain of nucleotide exchange factor GrpE"/>
    <property type="match status" value="1"/>
</dbReference>
<dbReference type="HAMAP" id="MF_01151">
    <property type="entry name" value="GrpE"/>
    <property type="match status" value="1"/>
</dbReference>
<dbReference type="InterPro" id="IPR000740">
    <property type="entry name" value="GrpE"/>
</dbReference>
<dbReference type="InterPro" id="IPR013805">
    <property type="entry name" value="GrpE_coiled_coil"/>
</dbReference>
<dbReference type="InterPro" id="IPR009012">
    <property type="entry name" value="GrpE_head"/>
</dbReference>
<dbReference type="PANTHER" id="PTHR21237">
    <property type="entry name" value="GRPE PROTEIN"/>
    <property type="match status" value="1"/>
</dbReference>
<dbReference type="PANTHER" id="PTHR21237:SF23">
    <property type="entry name" value="GRPE PROTEIN HOMOLOG, MITOCHONDRIAL"/>
    <property type="match status" value="1"/>
</dbReference>
<dbReference type="Pfam" id="PF01025">
    <property type="entry name" value="GrpE"/>
    <property type="match status" value="1"/>
</dbReference>
<dbReference type="PRINTS" id="PR00773">
    <property type="entry name" value="GRPEPROTEIN"/>
</dbReference>
<dbReference type="SUPFAM" id="SSF58014">
    <property type="entry name" value="Coiled-coil domain of nucleotide exchange factor GrpE"/>
    <property type="match status" value="1"/>
</dbReference>
<dbReference type="SUPFAM" id="SSF51064">
    <property type="entry name" value="Head domain of nucleotide exchange factor GrpE"/>
    <property type="match status" value="1"/>
</dbReference>
<dbReference type="PROSITE" id="PS01071">
    <property type="entry name" value="GRPE"/>
    <property type="match status" value="1"/>
</dbReference>
<proteinExistence type="evidence at transcript level"/>
<name>GRPE_DROME</name>
<evidence type="ECO:0000250" key="1"/>
<evidence type="ECO:0000255" key="2"/>
<evidence type="ECO:0000256" key="3">
    <source>
        <dbReference type="SAM" id="MobiDB-lite"/>
    </source>
</evidence>
<evidence type="ECO:0000305" key="4"/>